<gene>
    <name type="primary">ileS2</name>
    <name type="synonym">mupM</name>
</gene>
<organism>
    <name type="scientific">Pseudomonas fluorescens</name>
    <dbReference type="NCBI Taxonomy" id="294"/>
    <lineage>
        <taxon>Bacteria</taxon>
        <taxon>Pseudomonadati</taxon>
        <taxon>Pseudomonadota</taxon>
        <taxon>Gammaproteobacteria</taxon>
        <taxon>Pseudomonadales</taxon>
        <taxon>Pseudomonadaceae</taxon>
        <taxon>Pseudomonas</taxon>
    </lineage>
</organism>
<reference key="1">
    <citation type="journal article" date="2002" name="DNA Seq.">
        <title>Analysis of rILERS, an isoleucyl-tRNA synthetase gene associated with mupirocin production by Pseudomonas fluorescens NCIMB 10586.</title>
        <authorList>
            <person name="Rangaswamy V."/>
            <person name="Hernandez-Guzman G."/>
            <person name="Shufran K.A."/>
            <person name="Bender C.L."/>
        </authorList>
    </citation>
    <scope>NUCLEOTIDE SEQUENCE [GENOMIC DNA]</scope>
    <source>
        <strain>ATCC 49323 / NCIMB 10586</strain>
    </source>
</reference>
<reference key="2">
    <citation type="submission" date="2002-01" db="EMBL/GenBank/DDBJ databases">
        <title>Nucleotide sequence of a 75 kb region of the chromosome of Pseudomonas fluorescens NCIMB 10586 required for biosynthesis of the polyketide antibiotic mupirocin.</title>
        <authorList>
            <person name="El-Sayed A.K."/>
            <person name="Hothersall J."/>
            <person name="Cooper S.M."/>
            <person name="Stephens E."/>
            <person name="Thomas C.M."/>
        </authorList>
    </citation>
    <scope>NUCLEOTIDE SEQUENCE [GENOMIC DNA]</scope>
    <source>
        <strain>ATCC 49323 / NCIMB 10586</strain>
    </source>
</reference>
<reference key="3">
    <citation type="submission" date="2014-02" db="EMBL/GenBank/DDBJ databases">
        <authorList>
            <person name="Haines A.S."/>
            <person name="Stephens E."/>
            <person name="Hothersall J."/>
            <person name="Thomas C.M."/>
        </authorList>
    </citation>
    <scope>SEQUENCE REVISION</scope>
</reference>
<reference key="4">
    <citation type="journal article" date="2003" name="J. Biol. Chem.">
        <title>How does Pseudomonas fluorescens avoid suicide from its antibiotic pseudomonic acid? Evidence for two evolutionarily distinct isoleucyl-tRNA synthetases conferring self-defense.</title>
        <authorList>
            <person name="Yanagisawa T."/>
            <person name="Kawakami M."/>
        </authorList>
    </citation>
    <scope>NUCLEOTIDE SEQUENCE [GENOMIC DNA]</scope>
    <scope>PROTEIN SEQUENCE OF 2-13</scope>
    <scope>RESISTANCE TO MUPIROCIN</scope>
    <source>
        <strain>ATCC 49323 / NCIMB 10586</strain>
    </source>
</reference>
<name>SYI2_PSEFL</name>
<accession>Q8L1B1</accession>
<accession>Q8GM72</accession>
<accession>Q8RL58</accession>
<comment type="function">
    <text evidence="1">Catalyzes the attachment of isoleucine to tRNA(Ile). As IleRS can inadvertently accommodate and process structurally similar amino acids such as valine, to avoid such errors it has two additional distinct tRNA(Ile)-dependent editing activities. One activity is designated as 'pretransfer' editing and involves the hydrolysis of activated Val-AMP. The other activity is designated 'posttransfer' editing and involves deacylation of mischarged Val-tRNA(Ile) (By similarity).</text>
</comment>
<comment type="function">
    <text>Confers high-level resistance to the antibiotic mupirocin (pseudomonic acid A), an Ile-analog produced by P.fluorescens NCIMB 10586 itself that competitively inhibits activation by Ile-tRNA synthetase, thus inhibiting protein biosynthesis.</text>
</comment>
<comment type="catalytic activity">
    <reaction>
        <text>tRNA(Ile) + L-isoleucine + ATP = L-isoleucyl-tRNA(Ile) + AMP + diphosphate</text>
        <dbReference type="Rhea" id="RHEA:11060"/>
        <dbReference type="Rhea" id="RHEA-COMP:9666"/>
        <dbReference type="Rhea" id="RHEA-COMP:9695"/>
        <dbReference type="ChEBI" id="CHEBI:30616"/>
        <dbReference type="ChEBI" id="CHEBI:33019"/>
        <dbReference type="ChEBI" id="CHEBI:58045"/>
        <dbReference type="ChEBI" id="CHEBI:78442"/>
        <dbReference type="ChEBI" id="CHEBI:78528"/>
        <dbReference type="ChEBI" id="CHEBI:456215"/>
        <dbReference type="EC" id="6.1.1.5"/>
    </reaction>
</comment>
<comment type="cofactor">
    <cofactor evidence="1">
        <name>Zn(2+)</name>
        <dbReference type="ChEBI" id="CHEBI:29105"/>
    </cofactor>
</comment>
<comment type="biophysicochemical properties">
    <kinetics>
        <KM>10 uM for isoleucine</KM>
        <KM>330 uM for ATP</KM>
    </kinetics>
</comment>
<comment type="subunit">
    <text evidence="1">Monomer.</text>
</comment>
<comment type="subcellular location">
    <subcellularLocation>
        <location evidence="1">Cytoplasm</location>
    </subcellularLocation>
</comment>
<comment type="domain">
    <text evidence="1">IleRS has two distinct active sites: one for aminoacylation and one for editing. The misactivated valine is translocated from the active site to the editing site, which sterically excludes the correctly activated isoleucine. The single editing site contains two valyl binding pockets, one specific for each substrate (Val-AMP or Val-tRNA(Ile)) (By similarity).</text>
</comment>
<comment type="miscellaneous">
    <text>P.fluorescens NCIMB 10586 possesses two distinct IleRSs (IleRS-R1 and IleRS-R2), each with a different level of sensitivity to mupirocin. Purified IleRs-R2 shows no sensitivity to mupirocin even at a concentration of 5 mM, 100'000 fold higher than the Ki value of IleRS-R1.</text>
</comment>
<comment type="similarity">
    <text evidence="3">Belongs to the class-I aminoacyl-tRNA synthetase family. IleS type 2 subfamily.</text>
</comment>
<proteinExistence type="evidence at protein level"/>
<protein>
    <recommendedName>
        <fullName>Isoleucine--tRNA ligase 2</fullName>
        <ecNumber>6.1.1.5</ecNumber>
    </recommendedName>
    <alternativeName>
        <fullName>Isoleucyl-tRNA synthetase 2</fullName>
        <shortName>IleRS 2</shortName>
    </alternativeName>
</protein>
<feature type="initiator methionine" description="Removed" evidence="2">
    <location>
        <position position="1"/>
    </location>
</feature>
<feature type="chain" id="PRO_0000098556" description="Isoleucine--tRNA ligase 2">
    <location>
        <begin position="2"/>
        <end position="1030"/>
    </location>
</feature>
<feature type="short sequence motif" description="'HIGH' region">
    <location>
        <begin position="48"/>
        <end position="58"/>
    </location>
</feature>
<feature type="short sequence motif" description="'KMSKS' region">
    <location>
        <begin position="589"/>
        <end position="593"/>
    </location>
</feature>
<feature type="binding site" evidence="1">
    <location>
        <position position="592"/>
    </location>
    <ligand>
        <name>ATP</name>
        <dbReference type="ChEBI" id="CHEBI:30616"/>
    </ligand>
</feature>
<feature type="sequence conflict" description="In Ref. 1; AAL85500." evidence="3" ref="1">
    <original>G</original>
    <variation>R</variation>
    <location>
        <position position="175"/>
    </location>
</feature>
<sequence>MSTEGSGPVRFPAMEDAVLERWEKEKTFEQSISAREGKPVYVFYDGPPFATGLPHYGHILTSYIKDVIPRYQTMLGKQVPRRWGWDCHGLPVEFEVEKAMGFKSKRDILEFGVEQFNDECRELVLKYADDWRGFVNRMGRWVDFDGAYKTMDNDYMESVLWGFKTLHDKGHVYEGGKIVPYCVRCQTVLSNFEARLDDAFRPRRDMSAYVKFRQQDRPDTFFLAWTTTPWTLPANVALAVAADENYVCIEHGEERLWLAEGCLGGLFDEPVILERCTGAELAGLRYLPVVGEVIDASAHRVVTADFVQMGDGSGIVHIAPAFGEDDALLGQQYELPAPNPVRDDGTFSDAVAQYAGQNIFEATPRILADLKSSGLLFKQEQIEHNYPHCWRCDNPLIYRAVESWFIRASALREQLVENNSQVNWVPEHVKEGRFGDWIRNARDWAVSRNRFWGAPIPVWRCDQCGTVEVMGSIAQIEARSGRKVEDLHVPHIDEHRFACQCCEGTMSRVTGVFDCWFESGAMPFASRHYPFENKQEFEQTFPADFIVEYLAQTRGWFYTMMVISTGCFEQNPFKNAMCHGVILAKDGRKMSKRLKNYPNPMDLMQTHGSDALRVALLASPVCKGEDIKFSEESVRDVVRRYHLLFWNCLQFYKTFTEIDQFSPSGDLGQPLDNVLDHYLLHELAALESDIKMWMESLDFSKIYSRIEVFINVLSTWYLRLNKARIWRDGLDDDKRQCYEVLHYALSNFARLLAPFMPFLAEAVYTELGYADSVHLQDWPSIDRQYLSYELADEMSSLRNLIASVRNVRETNGVSQKFPLRSIRVAGIEQAVLERYAQFLEEELNVKQVQWAADADEWAQPVVVLIFSLLGKRLGPAMKAVTTAVKAGEYVIDEQGGLVAAGQTIQPHEFERRLTVRDTLNNVGIVENMVVWLDLDIDASLKREGAVRELNRRLQDLRKKAKLGYTEKVDIAVLGGAYVDEILVHHEDWLKSQLLVQSLLRSDLEAPLAVDEVELPEGDPVRIQLRRSVLA</sequence>
<evidence type="ECO:0000250" key="1"/>
<evidence type="ECO:0000269" key="2">
    <source>
    </source>
</evidence>
<evidence type="ECO:0000305" key="3"/>
<keyword id="KW-0030">Aminoacyl-tRNA synthetase</keyword>
<keyword id="KW-0046">Antibiotic resistance</keyword>
<keyword id="KW-0067">ATP-binding</keyword>
<keyword id="KW-0963">Cytoplasm</keyword>
<keyword id="KW-0903">Direct protein sequencing</keyword>
<keyword id="KW-0436">Ligase</keyword>
<keyword id="KW-0479">Metal-binding</keyword>
<keyword id="KW-0547">Nucleotide-binding</keyword>
<keyword id="KW-0648">Protein biosynthesis</keyword>
<keyword id="KW-0862">Zinc</keyword>
<dbReference type="EC" id="6.1.1.5"/>
<dbReference type="EMBL" id="AY079084">
    <property type="protein sequence ID" value="AAL85500.1"/>
    <property type="molecule type" value="Genomic_DNA"/>
</dbReference>
<dbReference type="EMBL" id="AF318063">
    <property type="protein sequence ID" value="AAM12927.2"/>
    <property type="molecule type" value="Genomic_DNA"/>
</dbReference>
<dbReference type="EMBL" id="AB062785">
    <property type="protein sequence ID" value="BAC07171.1"/>
    <property type="molecule type" value="Genomic_DNA"/>
</dbReference>
<dbReference type="SMR" id="Q8L1B1"/>
<dbReference type="BRENDA" id="6.1.1.5">
    <property type="organism ID" value="5121"/>
</dbReference>
<dbReference type="SABIO-RK" id="Q8L1B1"/>
<dbReference type="GO" id="GO:0005737">
    <property type="term" value="C:cytoplasm"/>
    <property type="evidence" value="ECO:0007669"/>
    <property type="project" value="UniProtKB-SubCell"/>
</dbReference>
<dbReference type="GO" id="GO:0002161">
    <property type="term" value="F:aminoacyl-tRNA deacylase activity"/>
    <property type="evidence" value="ECO:0007669"/>
    <property type="project" value="InterPro"/>
</dbReference>
<dbReference type="GO" id="GO:0005524">
    <property type="term" value="F:ATP binding"/>
    <property type="evidence" value="ECO:0007669"/>
    <property type="project" value="UniProtKB-UniRule"/>
</dbReference>
<dbReference type="GO" id="GO:0004822">
    <property type="term" value="F:isoleucine-tRNA ligase activity"/>
    <property type="evidence" value="ECO:0007669"/>
    <property type="project" value="UniProtKB-UniRule"/>
</dbReference>
<dbReference type="GO" id="GO:0000049">
    <property type="term" value="F:tRNA binding"/>
    <property type="evidence" value="ECO:0007669"/>
    <property type="project" value="InterPro"/>
</dbReference>
<dbReference type="GO" id="GO:0008270">
    <property type="term" value="F:zinc ion binding"/>
    <property type="evidence" value="ECO:0007669"/>
    <property type="project" value="UniProtKB-UniRule"/>
</dbReference>
<dbReference type="GO" id="GO:0006428">
    <property type="term" value="P:isoleucyl-tRNA aminoacylation"/>
    <property type="evidence" value="ECO:0007669"/>
    <property type="project" value="UniProtKB-UniRule"/>
</dbReference>
<dbReference type="GO" id="GO:0046677">
    <property type="term" value="P:response to antibiotic"/>
    <property type="evidence" value="ECO:0007669"/>
    <property type="project" value="UniProtKB-KW"/>
</dbReference>
<dbReference type="CDD" id="cd07961">
    <property type="entry name" value="Anticodon_Ia_Ile_ABEc"/>
    <property type="match status" value="1"/>
</dbReference>
<dbReference type="CDD" id="cd00818">
    <property type="entry name" value="IleRS_core"/>
    <property type="match status" value="1"/>
</dbReference>
<dbReference type="FunFam" id="3.40.50.620:FF:000063">
    <property type="entry name" value="Isoleucine--tRNA ligase"/>
    <property type="match status" value="1"/>
</dbReference>
<dbReference type="FunFam" id="3.40.50.620:FF:000075">
    <property type="entry name" value="Isoleucine--tRNA ligase"/>
    <property type="match status" value="1"/>
</dbReference>
<dbReference type="Gene3D" id="3.40.50.620">
    <property type="entry name" value="HUPs"/>
    <property type="match status" value="2"/>
</dbReference>
<dbReference type="Gene3D" id="1.10.730.10">
    <property type="entry name" value="Isoleucyl-tRNA Synthetase, Domain 1"/>
    <property type="match status" value="1"/>
</dbReference>
<dbReference type="HAMAP" id="MF_02003">
    <property type="entry name" value="Ile_tRNA_synth_type2"/>
    <property type="match status" value="1"/>
</dbReference>
<dbReference type="InterPro" id="IPR001412">
    <property type="entry name" value="aa-tRNA-synth_I_CS"/>
</dbReference>
<dbReference type="InterPro" id="IPR002300">
    <property type="entry name" value="aa-tRNA-synth_Ia"/>
</dbReference>
<dbReference type="InterPro" id="IPR033709">
    <property type="entry name" value="Anticodon_Ile_ABEc"/>
</dbReference>
<dbReference type="InterPro" id="IPR002301">
    <property type="entry name" value="Ile-tRNA-ligase"/>
</dbReference>
<dbReference type="InterPro" id="IPR023586">
    <property type="entry name" value="Ile-tRNA-ligase_type2"/>
</dbReference>
<dbReference type="InterPro" id="IPR013155">
    <property type="entry name" value="M/V/L/I-tRNA-synth_anticd-bd"/>
</dbReference>
<dbReference type="InterPro" id="IPR014729">
    <property type="entry name" value="Rossmann-like_a/b/a_fold"/>
</dbReference>
<dbReference type="InterPro" id="IPR009080">
    <property type="entry name" value="tRNAsynth_Ia_anticodon-bd"/>
</dbReference>
<dbReference type="InterPro" id="IPR009008">
    <property type="entry name" value="Val/Leu/Ile-tRNA-synth_edit"/>
</dbReference>
<dbReference type="NCBIfam" id="TIGR00392">
    <property type="entry name" value="ileS"/>
    <property type="match status" value="1"/>
</dbReference>
<dbReference type="PANTHER" id="PTHR42780:SF1">
    <property type="entry name" value="ISOLEUCINE--TRNA LIGASE, CYTOPLASMIC"/>
    <property type="match status" value="1"/>
</dbReference>
<dbReference type="PANTHER" id="PTHR42780">
    <property type="entry name" value="SOLEUCYL-TRNA SYNTHETASE"/>
    <property type="match status" value="1"/>
</dbReference>
<dbReference type="Pfam" id="PF08264">
    <property type="entry name" value="Anticodon_1"/>
    <property type="match status" value="1"/>
</dbReference>
<dbReference type="Pfam" id="PF19302">
    <property type="entry name" value="DUF5915"/>
    <property type="match status" value="1"/>
</dbReference>
<dbReference type="Pfam" id="PF00133">
    <property type="entry name" value="tRNA-synt_1"/>
    <property type="match status" value="1"/>
</dbReference>
<dbReference type="PRINTS" id="PR00984">
    <property type="entry name" value="TRNASYNTHILE"/>
</dbReference>
<dbReference type="SUPFAM" id="SSF47323">
    <property type="entry name" value="Anticodon-binding domain of a subclass of class I aminoacyl-tRNA synthetases"/>
    <property type="match status" value="1"/>
</dbReference>
<dbReference type="SUPFAM" id="SSF52374">
    <property type="entry name" value="Nucleotidylyl transferase"/>
    <property type="match status" value="1"/>
</dbReference>
<dbReference type="SUPFAM" id="SSF50677">
    <property type="entry name" value="ValRS/IleRS/LeuRS editing domain"/>
    <property type="match status" value="1"/>
</dbReference>
<dbReference type="PROSITE" id="PS00178">
    <property type="entry name" value="AA_TRNA_LIGASE_I"/>
    <property type="match status" value="1"/>
</dbReference>